<keyword id="KW-0002">3D-structure</keyword>
<keyword id="KW-0067">ATP-binding</keyword>
<keyword id="KW-0173">Coenzyme A biosynthesis</keyword>
<keyword id="KW-0963">Cytoplasm</keyword>
<keyword id="KW-0418">Kinase</keyword>
<keyword id="KW-0547">Nucleotide-binding</keyword>
<keyword id="KW-0808">Transferase</keyword>
<proteinExistence type="evidence at protein level"/>
<gene>
    <name evidence="1" type="primary">coaW</name>
    <name type="ordered locus">MW2054</name>
</gene>
<accession>Q8NVG0</accession>
<protein>
    <recommendedName>
        <fullName evidence="1">Type II pantothenate kinase</fullName>
        <ecNumber evidence="1">2.7.1.33</ecNumber>
    </recommendedName>
    <alternativeName>
        <fullName evidence="1">PanK-II</fullName>
    </alternativeName>
    <alternativeName>
        <fullName evidence="1">Pantothenic acid kinase</fullName>
    </alternativeName>
</protein>
<sequence>MKVGIDAGGTLIKIVQEQDNQRTFKTELTKNIDQVVEWLNQQQIEKLCLTGGNAGVIAENINIPAQIFVEFDAASQGLGILLKEQGHDLADYIFANVGTGTSLHYFDGQSQRRVGGIGTGGGMIQGLGYLLSQITDYKQLTDMAQHGDRNTIDLKVRHIYKDTEPPIPGDLTAANFGHVLHHLDADFTPSNKLAAVIGVVGEVVTTMAITVAREFKTENIVYIGSSFHNNALLRKVVEDYTVLRGCKPYYVENGAFSGAIGALYLEK</sequence>
<name>COAW_STAAW</name>
<reference key="1">
    <citation type="journal article" date="2002" name="Lancet">
        <title>Genome and virulence determinants of high virulence community-acquired MRSA.</title>
        <authorList>
            <person name="Baba T."/>
            <person name="Takeuchi F."/>
            <person name="Kuroda M."/>
            <person name="Yuzawa H."/>
            <person name="Aoki K."/>
            <person name="Oguchi A."/>
            <person name="Nagai Y."/>
            <person name="Iwama N."/>
            <person name="Asano K."/>
            <person name="Naimi T."/>
            <person name="Kuroda H."/>
            <person name="Cui L."/>
            <person name="Yamamoto K."/>
            <person name="Hiramatsu K."/>
        </authorList>
    </citation>
    <scope>NUCLEOTIDE SEQUENCE [LARGE SCALE GENOMIC DNA]</scope>
    <source>
        <strain>MW2</strain>
    </source>
</reference>
<organism>
    <name type="scientific">Staphylococcus aureus (strain MW2)</name>
    <dbReference type="NCBI Taxonomy" id="196620"/>
    <lineage>
        <taxon>Bacteria</taxon>
        <taxon>Bacillati</taxon>
        <taxon>Bacillota</taxon>
        <taxon>Bacilli</taxon>
        <taxon>Bacillales</taxon>
        <taxon>Staphylococcaceae</taxon>
        <taxon>Staphylococcus</taxon>
    </lineage>
</organism>
<feature type="chain" id="PRO_0000261348" description="Type II pantothenate kinase">
    <location>
        <begin position="1"/>
        <end position="267"/>
    </location>
</feature>
<feature type="active site" description="Proton acceptor" evidence="1">
    <location>
        <position position="70"/>
    </location>
</feature>
<feature type="binding site" evidence="1">
    <location>
        <begin position="6"/>
        <end position="13"/>
    </location>
    <ligand>
        <name>ATP</name>
        <dbReference type="ChEBI" id="CHEBI:30616"/>
    </ligand>
</feature>
<feature type="binding site" evidence="1">
    <location>
        <position position="99"/>
    </location>
    <ligand>
        <name>ATP</name>
        <dbReference type="ChEBI" id="CHEBI:30616"/>
    </ligand>
</feature>
<feature type="binding site" evidence="1">
    <location>
        <begin position="121"/>
        <end position="125"/>
    </location>
    <ligand>
        <name>ATP</name>
        <dbReference type="ChEBI" id="CHEBI:30616"/>
    </ligand>
</feature>
<feature type="binding site" evidence="1">
    <location>
        <position position="137"/>
    </location>
    <ligand>
        <name>ATP</name>
        <dbReference type="ChEBI" id="CHEBI:30616"/>
    </ligand>
</feature>
<feature type="binding site" evidence="1">
    <location>
        <position position="225"/>
    </location>
    <ligand>
        <name>ATP</name>
        <dbReference type="ChEBI" id="CHEBI:30616"/>
    </ligand>
</feature>
<feature type="strand" evidence="2">
    <location>
        <begin position="2"/>
        <end position="7"/>
    </location>
</feature>
<feature type="strand" evidence="2">
    <location>
        <begin position="9"/>
        <end position="17"/>
    </location>
</feature>
<feature type="strand" evidence="2">
    <location>
        <begin position="22"/>
        <end position="28"/>
    </location>
</feature>
<feature type="helix" evidence="2">
    <location>
        <begin position="29"/>
        <end position="31"/>
    </location>
</feature>
<feature type="helix" evidence="2">
    <location>
        <begin position="32"/>
        <end position="40"/>
    </location>
</feature>
<feature type="strand" evidence="2">
    <location>
        <begin position="47"/>
        <end position="51"/>
    </location>
</feature>
<feature type="helix" evidence="2">
    <location>
        <begin position="54"/>
        <end position="59"/>
    </location>
</feature>
<feature type="strand" evidence="3">
    <location>
        <begin position="61"/>
        <end position="63"/>
    </location>
</feature>
<feature type="strand" evidence="2">
    <location>
        <begin position="65"/>
        <end position="67"/>
    </location>
</feature>
<feature type="helix" evidence="2">
    <location>
        <begin position="70"/>
        <end position="84"/>
    </location>
</feature>
<feature type="strand" evidence="2">
    <location>
        <begin position="92"/>
        <end position="106"/>
    </location>
</feature>
<feature type="strand" evidence="2">
    <location>
        <begin position="111"/>
        <end position="118"/>
    </location>
</feature>
<feature type="helix" evidence="2">
    <location>
        <begin position="121"/>
        <end position="132"/>
    </location>
</feature>
<feature type="helix" evidence="2">
    <location>
        <begin position="137"/>
        <end position="144"/>
    </location>
</feature>
<feature type="turn" evidence="2">
    <location>
        <begin position="150"/>
        <end position="152"/>
    </location>
</feature>
<feature type="helix" evidence="2">
    <location>
        <begin position="156"/>
        <end position="160"/>
    </location>
</feature>
<feature type="strand" evidence="2">
    <location>
        <begin position="171"/>
        <end position="174"/>
    </location>
</feature>
<feature type="turn" evidence="2">
    <location>
        <begin position="175"/>
        <end position="178"/>
    </location>
</feature>
<feature type="helix" evidence="2">
    <location>
        <begin position="179"/>
        <end position="181"/>
    </location>
</feature>
<feature type="helix" evidence="2">
    <location>
        <begin position="189"/>
        <end position="215"/>
    </location>
</feature>
<feature type="strand" evidence="2">
    <location>
        <begin position="219"/>
        <end position="224"/>
    </location>
</feature>
<feature type="helix" evidence="2">
    <location>
        <begin position="225"/>
        <end position="227"/>
    </location>
</feature>
<feature type="helix" evidence="2">
    <location>
        <begin position="231"/>
        <end position="243"/>
    </location>
</feature>
<feature type="strand" evidence="2">
    <location>
        <begin position="247"/>
        <end position="250"/>
    </location>
</feature>
<feature type="helix" evidence="2">
    <location>
        <begin position="254"/>
        <end position="256"/>
    </location>
</feature>
<feature type="helix" evidence="2">
    <location>
        <begin position="257"/>
        <end position="267"/>
    </location>
</feature>
<comment type="function">
    <text evidence="1">Catalyzes the phosphorylation of pantothenate (Pan), the first step in CoA biosynthesis.</text>
</comment>
<comment type="catalytic activity">
    <reaction evidence="1">
        <text>(R)-pantothenate + ATP = (R)-4'-phosphopantothenate + ADP + H(+)</text>
        <dbReference type="Rhea" id="RHEA:16373"/>
        <dbReference type="ChEBI" id="CHEBI:10986"/>
        <dbReference type="ChEBI" id="CHEBI:15378"/>
        <dbReference type="ChEBI" id="CHEBI:29032"/>
        <dbReference type="ChEBI" id="CHEBI:30616"/>
        <dbReference type="ChEBI" id="CHEBI:456216"/>
        <dbReference type="EC" id="2.7.1.33"/>
    </reaction>
</comment>
<comment type="pathway">
    <text evidence="1">Cofactor biosynthesis; coenzyme A biosynthesis; CoA from (R)-pantothenate: step 1/5.</text>
</comment>
<comment type="subunit">
    <text evidence="1">Homodimer.</text>
</comment>
<comment type="subcellular location">
    <subcellularLocation>
        <location evidence="1">Cytoplasm</location>
    </subcellularLocation>
</comment>
<comment type="similarity">
    <text evidence="1">Belongs to the type II pantothenate kinase family.</text>
</comment>
<evidence type="ECO:0000255" key="1">
    <source>
        <dbReference type="HAMAP-Rule" id="MF_01273"/>
    </source>
</evidence>
<evidence type="ECO:0007829" key="2">
    <source>
        <dbReference type="PDB" id="4M7X"/>
    </source>
</evidence>
<evidence type="ECO:0007829" key="3">
    <source>
        <dbReference type="PDB" id="4M7Y"/>
    </source>
</evidence>
<dbReference type="EC" id="2.7.1.33" evidence="1"/>
<dbReference type="EMBL" id="BA000033">
    <property type="protein sequence ID" value="BAB95919.1"/>
    <property type="molecule type" value="Genomic_DNA"/>
</dbReference>
<dbReference type="RefSeq" id="WP_000862727.1">
    <property type="nucleotide sequence ID" value="NC_003923.1"/>
</dbReference>
<dbReference type="PDB" id="4M7X">
    <property type="method" value="X-ray"/>
    <property type="resolution" value="1.42 A"/>
    <property type="chains" value="A=1-267"/>
</dbReference>
<dbReference type="PDB" id="4M7Y">
    <property type="method" value="X-ray"/>
    <property type="resolution" value="1.80 A"/>
    <property type="chains" value="A/B=1-267"/>
</dbReference>
<dbReference type="PDBsum" id="4M7X"/>
<dbReference type="PDBsum" id="4M7Y"/>
<dbReference type="SMR" id="Q8NVG0"/>
<dbReference type="DNASU" id="1004170"/>
<dbReference type="KEGG" id="sam:MW2054"/>
<dbReference type="HOGENOM" id="CLU_087521_1_0_9"/>
<dbReference type="UniPathway" id="UPA00241">
    <property type="reaction ID" value="UER00352"/>
</dbReference>
<dbReference type="EvolutionaryTrace" id="Q8NVG0"/>
<dbReference type="GO" id="GO:0005829">
    <property type="term" value="C:cytosol"/>
    <property type="evidence" value="ECO:0007669"/>
    <property type="project" value="TreeGrafter"/>
</dbReference>
<dbReference type="GO" id="GO:0005524">
    <property type="term" value="F:ATP binding"/>
    <property type="evidence" value="ECO:0007669"/>
    <property type="project" value="UniProtKB-UniRule"/>
</dbReference>
<dbReference type="GO" id="GO:0004594">
    <property type="term" value="F:pantothenate kinase activity"/>
    <property type="evidence" value="ECO:0007669"/>
    <property type="project" value="UniProtKB-UniRule"/>
</dbReference>
<dbReference type="GO" id="GO:0015937">
    <property type="term" value="P:coenzyme A biosynthetic process"/>
    <property type="evidence" value="ECO:0007669"/>
    <property type="project" value="UniProtKB-UniRule"/>
</dbReference>
<dbReference type="CDD" id="cd24016">
    <property type="entry name" value="ASKHA_NBD_PanK-II"/>
    <property type="match status" value="1"/>
</dbReference>
<dbReference type="Gene3D" id="3.30.420.40">
    <property type="match status" value="1"/>
</dbReference>
<dbReference type="HAMAP" id="MF_01273">
    <property type="entry name" value="Pantothen_kinase_2"/>
    <property type="match status" value="1"/>
</dbReference>
<dbReference type="InterPro" id="IPR043129">
    <property type="entry name" value="ATPase_NBD"/>
</dbReference>
<dbReference type="InterPro" id="IPR004567">
    <property type="entry name" value="Type_II_PanK"/>
</dbReference>
<dbReference type="InterPro" id="IPR011602">
    <property type="entry name" value="Type_II_PanK_bac"/>
</dbReference>
<dbReference type="NCBIfam" id="TIGR00555">
    <property type="entry name" value="panK_eukar"/>
    <property type="match status" value="1"/>
</dbReference>
<dbReference type="NCBIfam" id="NF009842">
    <property type="entry name" value="PRK13317.1"/>
    <property type="match status" value="1"/>
</dbReference>
<dbReference type="PANTHER" id="PTHR12280:SF20">
    <property type="entry name" value="4'-PHOSPHOPANTETHEINE PHOSPHATASE"/>
    <property type="match status" value="1"/>
</dbReference>
<dbReference type="PANTHER" id="PTHR12280">
    <property type="entry name" value="PANTOTHENATE KINASE"/>
    <property type="match status" value="1"/>
</dbReference>
<dbReference type="Pfam" id="PF03630">
    <property type="entry name" value="Fumble"/>
    <property type="match status" value="1"/>
</dbReference>
<dbReference type="PIRSF" id="PIRSF036940">
    <property type="entry name" value="PanK_bac_aCoA"/>
    <property type="match status" value="1"/>
</dbReference>
<dbReference type="SUPFAM" id="SSF53067">
    <property type="entry name" value="Actin-like ATPase domain"/>
    <property type="match status" value="1"/>
</dbReference>